<accession>Q8G6I3</accession>
<comment type="function">
    <text evidence="1">Specifically dimethylates two adjacent adenosines (A1518 and A1519) in the loop of a conserved hairpin near the 3'-end of 16S rRNA in the 30S particle. May play a critical role in biogenesis of 30S subunits.</text>
</comment>
<comment type="catalytic activity">
    <reaction evidence="1">
        <text>adenosine(1518)/adenosine(1519) in 16S rRNA + 4 S-adenosyl-L-methionine = N(6)-dimethyladenosine(1518)/N(6)-dimethyladenosine(1519) in 16S rRNA + 4 S-adenosyl-L-homocysteine + 4 H(+)</text>
        <dbReference type="Rhea" id="RHEA:19609"/>
        <dbReference type="Rhea" id="RHEA-COMP:10232"/>
        <dbReference type="Rhea" id="RHEA-COMP:10233"/>
        <dbReference type="ChEBI" id="CHEBI:15378"/>
        <dbReference type="ChEBI" id="CHEBI:57856"/>
        <dbReference type="ChEBI" id="CHEBI:59789"/>
        <dbReference type="ChEBI" id="CHEBI:74411"/>
        <dbReference type="ChEBI" id="CHEBI:74493"/>
        <dbReference type="EC" id="2.1.1.182"/>
    </reaction>
</comment>
<comment type="subcellular location">
    <subcellularLocation>
        <location evidence="1">Cytoplasm</location>
    </subcellularLocation>
</comment>
<comment type="similarity">
    <text evidence="1">Belongs to the class I-like SAM-binding methyltransferase superfamily. rRNA adenine N(6)-methyltransferase family. RsmA subfamily.</text>
</comment>
<reference key="1">
    <citation type="journal article" date="2002" name="Proc. Natl. Acad. Sci. U.S.A.">
        <title>The genome sequence of Bifidobacterium longum reflects its adaptation to the human gastrointestinal tract.</title>
        <authorList>
            <person name="Schell M.A."/>
            <person name="Karmirantzou M."/>
            <person name="Snel B."/>
            <person name="Vilanova D."/>
            <person name="Berger B."/>
            <person name="Pessi G."/>
            <person name="Zwahlen M.-C."/>
            <person name="Desiere F."/>
            <person name="Bork P."/>
            <person name="Delley M."/>
            <person name="Pridmore R.D."/>
            <person name="Arigoni F."/>
        </authorList>
    </citation>
    <scope>NUCLEOTIDE SEQUENCE [LARGE SCALE GENOMIC DNA]</scope>
    <source>
        <strain>NCC 2705</strain>
    </source>
</reference>
<evidence type="ECO:0000255" key="1">
    <source>
        <dbReference type="HAMAP-Rule" id="MF_00607"/>
    </source>
</evidence>
<sequence length="308" mass="32646">MNDTIPATGHLLGAADIRRIAADAGISPTKKFGQNFVIDPGTVRRIVREAGVTAADHVMEVGPGLGSLTLAILETGATMTAVEIDPPLAERLPGTVAEFMPEATSRLTVVNRDALTVTPENVPDFSDDASFTLVANLPYNVATPILLTLLERFDNLGSFLVMVQKEVADRLAAKPGSKIYGTPSVKLAWYGTAERVGTIGRNVFWPAPNVDSALVRFTRYQADDPAAPGASNSTADGGTQRELVFRLIDAAFGQRRKTLHAALKTIAPSEAFSIAGIDPTRRGETLTIAEFTALAKAIESCGDGDEAQ</sequence>
<gene>
    <name evidence="1" type="primary">rsmA</name>
    <name evidence="1" type="synonym">ksgA</name>
    <name type="ordered locus">BL0657</name>
</gene>
<proteinExistence type="inferred from homology"/>
<name>RSMA_BIFLO</name>
<protein>
    <recommendedName>
        <fullName evidence="1">Ribosomal RNA small subunit methyltransferase A</fullName>
        <ecNumber evidence="1">2.1.1.182</ecNumber>
    </recommendedName>
    <alternativeName>
        <fullName evidence="1">16S rRNA (adenine(1518)-N(6)/adenine(1519)-N(6))-dimethyltransferase</fullName>
    </alternativeName>
    <alternativeName>
        <fullName evidence="1">16S rRNA dimethyladenosine transferase</fullName>
    </alternativeName>
    <alternativeName>
        <fullName evidence="1">16S rRNA dimethylase</fullName>
    </alternativeName>
    <alternativeName>
        <fullName evidence="1">S-adenosylmethionine-6-N', N'-adenosyl(rRNA) dimethyltransferase</fullName>
    </alternativeName>
</protein>
<feature type="chain" id="PRO_0000101490" description="Ribosomal RNA small subunit methyltransferase A">
    <location>
        <begin position="1"/>
        <end position="308"/>
    </location>
</feature>
<feature type="binding site" evidence="1">
    <location>
        <position position="35"/>
    </location>
    <ligand>
        <name>S-adenosyl-L-methionine</name>
        <dbReference type="ChEBI" id="CHEBI:59789"/>
    </ligand>
</feature>
<feature type="binding site" evidence="1">
    <location>
        <position position="37"/>
    </location>
    <ligand>
        <name>S-adenosyl-L-methionine</name>
        <dbReference type="ChEBI" id="CHEBI:59789"/>
    </ligand>
</feature>
<feature type="binding site" evidence="1">
    <location>
        <position position="62"/>
    </location>
    <ligand>
        <name>S-adenosyl-L-methionine</name>
        <dbReference type="ChEBI" id="CHEBI:59789"/>
    </ligand>
</feature>
<feature type="binding site" evidence="1">
    <location>
        <position position="83"/>
    </location>
    <ligand>
        <name>S-adenosyl-L-methionine</name>
        <dbReference type="ChEBI" id="CHEBI:59789"/>
    </ligand>
</feature>
<feature type="binding site" evidence="1">
    <location>
        <position position="113"/>
    </location>
    <ligand>
        <name>S-adenosyl-L-methionine</name>
        <dbReference type="ChEBI" id="CHEBI:59789"/>
    </ligand>
</feature>
<feature type="binding site" evidence="1">
    <location>
        <position position="136"/>
    </location>
    <ligand>
        <name>S-adenosyl-L-methionine</name>
        <dbReference type="ChEBI" id="CHEBI:59789"/>
    </ligand>
</feature>
<organism>
    <name type="scientific">Bifidobacterium longum (strain NCC 2705)</name>
    <dbReference type="NCBI Taxonomy" id="206672"/>
    <lineage>
        <taxon>Bacteria</taxon>
        <taxon>Bacillati</taxon>
        <taxon>Actinomycetota</taxon>
        <taxon>Actinomycetes</taxon>
        <taxon>Bifidobacteriales</taxon>
        <taxon>Bifidobacteriaceae</taxon>
        <taxon>Bifidobacterium</taxon>
    </lineage>
</organism>
<keyword id="KW-0963">Cytoplasm</keyword>
<keyword id="KW-0489">Methyltransferase</keyword>
<keyword id="KW-1185">Reference proteome</keyword>
<keyword id="KW-0694">RNA-binding</keyword>
<keyword id="KW-0698">rRNA processing</keyword>
<keyword id="KW-0949">S-adenosyl-L-methionine</keyword>
<keyword id="KW-0808">Transferase</keyword>
<dbReference type="EC" id="2.1.1.182" evidence="1"/>
<dbReference type="EMBL" id="AE014295">
    <property type="protein sequence ID" value="AAN24479.1"/>
    <property type="molecule type" value="Genomic_DNA"/>
</dbReference>
<dbReference type="RefSeq" id="NP_695843.1">
    <property type="nucleotide sequence ID" value="NC_004307.2"/>
</dbReference>
<dbReference type="RefSeq" id="WP_011068602.1">
    <property type="nucleotide sequence ID" value="NC_004307.2"/>
</dbReference>
<dbReference type="SMR" id="Q8G6I3"/>
<dbReference type="STRING" id="206672.BL0657"/>
<dbReference type="EnsemblBacteria" id="AAN24479">
    <property type="protein sequence ID" value="AAN24479"/>
    <property type="gene ID" value="BL0657"/>
</dbReference>
<dbReference type="KEGG" id="blo:BL0657"/>
<dbReference type="PATRIC" id="fig|206672.9.peg.1388"/>
<dbReference type="HOGENOM" id="CLU_041220_1_1_11"/>
<dbReference type="OrthoDB" id="9814755at2"/>
<dbReference type="PhylomeDB" id="Q8G6I3"/>
<dbReference type="Proteomes" id="UP000000439">
    <property type="component" value="Chromosome"/>
</dbReference>
<dbReference type="GO" id="GO:0005829">
    <property type="term" value="C:cytosol"/>
    <property type="evidence" value="ECO:0007669"/>
    <property type="project" value="TreeGrafter"/>
</dbReference>
<dbReference type="GO" id="GO:0052908">
    <property type="term" value="F:16S rRNA (adenine(1518)-N(6)/adenine(1519)-N(6))-dimethyltransferase activity"/>
    <property type="evidence" value="ECO:0007669"/>
    <property type="project" value="UniProtKB-EC"/>
</dbReference>
<dbReference type="GO" id="GO:0003723">
    <property type="term" value="F:RNA binding"/>
    <property type="evidence" value="ECO:0007669"/>
    <property type="project" value="UniProtKB-KW"/>
</dbReference>
<dbReference type="FunFam" id="3.40.50.150:FF:000023">
    <property type="entry name" value="Ribosomal RNA small subunit methyltransferase A"/>
    <property type="match status" value="1"/>
</dbReference>
<dbReference type="Gene3D" id="1.10.8.100">
    <property type="entry name" value="Ribosomal RNA adenine dimethylase-like, domain 2"/>
    <property type="match status" value="1"/>
</dbReference>
<dbReference type="Gene3D" id="3.40.50.150">
    <property type="entry name" value="Vaccinia Virus protein VP39"/>
    <property type="match status" value="1"/>
</dbReference>
<dbReference type="HAMAP" id="MF_00607">
    <property type="entry name" value="16SrRNA_methyltr_A"/>
    <property type="match status" value="1"/>
</dbReference>
<dbReference type="InterPro" id="IPR001737">
    <property type="entry name" value="KsgA/Erm"/>
</dbReference>
<dbReference type="InterPro" id="IPR023165">
    <property type="entry name" value="rRNA_Ade_diMease-like_C"/>
</dbReference>
<dbReference type="InterPro" id="IPR020596">
    <property type="entry name" value="rRNA_Ade_Mease_Trfase_CS"/>
</dbReference>
<dbReference type="InterPro" id="IPR020598">
    <property type="entry name" value="rRNA_Ade_methylase_Trfase_N"/>
</dbReference>
<dbReference type="InterPro" id="IPR011530">
    <property type="entry name" value="rRNA_adenine_dimethylase"/>
</dbReference>
<dbReference type="InterPro" id="IPR029063">
    <property type="entry name" value="SAM-dependent_MTases_sf"/>
</dbReference>
<dbReference type="NCBIfam" id="TIGR00755">
    <property type="entry name" value="ksgA"/>
    <property type="match status" value="1"/>
</dbReference>
<dbReference type="PANTHER" id="PTHR11727">
    <property type="entry name" value="DIMETHYLADENOSINE TRANSFERASE"/>
    <property type="match status" value="1"/>
</dbReference>
<dbReference type="PANTHER" id="PTHR11727:SF7">
    <property type="entry name" value="DIMETHYLADENOSINE TRANSFERASE-RELATED"/>
    <property type="match status" value="1"/>
</dbReference>
<dbReference type="Pfam" id="PF00398">
    <property type="entry name" value="RrnaAD"/>
    <property type="match status" value="1"/>
</dbReference>
<dbReference type="SMART" id="SM00650">
    <property type="entry name" value="rADc"/>
    <property type="match status" value="1"/>
</dbReference>
<dbReference type="SUPFAM" id="SSF53335">
    <property type="entry name" value="S-adenosyl-L-methionine-dependent methyltransferases"/>
    <property type="match status" value="1"/>
</dbReference>
<dbReference type="PROSITE" id="PS01131">
    <property type="entry name" value="RRNA_A_DIMETH"/>
    <property type="match status" value="1"/>
</dbReference>
<dbReference type="PROSITE" id="PS51689">
    <property type="entry name" value="SAM_RNA_A_N6_MT"/>
    <property type="match status" value="1"/>
</dbReference>